<keyword id="KW-0028">Amino-acid biosynthesis</keyword>
<keyword id="KW-0057">Aromatic amino acid biosynthesis</keyword>
<keyword id="KW-0274">FAD</keyword>
<keyword id="KW-0285">Flavoprotein</keyword>
<keyword id="KW-0288">FMN</keyword>
<keyword id="KW-0456">Lyase</keyword>
<keyword id="KW-0521">NADP</keyword>
<comment type="function">
    <text evidence="1">Catalyzes the anti-1,4-elimination of the C-3 phosphate and the C-6 proR hydrogen from 5-enolpyruvylshikimate-3-phosphate (EPSP) to yield chorismate, which is the branch point compound that serves as the starting substrate for the three terminal pathways of aromatic amino acid biosynthesis. This reaction introduces a second double bond into the aromatic ring system.</text>
</comment>
<comment type="catalytic activity">
    <reaction evidence="1">
        <text>5-O-(1-carboxyvinyl)-3-phosphoshikimate = chorismate + phosphate</text>
        <dbReference type="Rhea" id="RHEA:21020"/>
        <dbReference type="ChEBI" id="CHEBI:29748"/>
        <dbReference type="ChEBI" id="CHEBI:43474"/>
        <dbReference type="ChEBI" id="CHEBI:57701"/>
        <dbReference type="EC" id="4.2.3.5"/>
    </reaction>
</comment>
<comment type="cofactor">
    <cofactor evidence="1">
        <name>FMNH2</name>
        <dbReference type="ChEBI" id="CHEBI:57618"/>
    </cofactor>
    <text evidence="1">Reduced FMN (FMNH(2)).</text>
</comment>
<comment type="pathway">
    <text evidence="1">Metabolic intermediate biosynthesis; chorismate biosynthesis; chorismate from D-erythrose 4-phosphate and phosphoenolpyruvate: step 7/7.</text>
</comment>
<comment type="subunit">
    <text evidence="1">Homotetramer.</text>
</comment>
<comment type="similarity">
    <text evidence="1">Belongs to the chorismate synthase family.</text>
</comment>
<sequence length="388" mass="42843">MRYLTAGESHGPRLTAIIEGIPAGLPLTAEDINEDLRRRQGGYGRGGRMKIESDQVVFTSGVRHGKTTGAPITMDVINKDHQKWLDIMSAEDIEDRLKSKRKITHPRPGHADLVGGIKYRFDDLRNSLERSSARETTMRVAVGAVAKRLLAELDMEIANHVVVFGGKEIDVPENLTVAEIKQRAAQSEVSIVNQEREQEIKDYIDQIKRDGDTIGGVVETVVGGVPVGXGSYVQWDRKLDARLAQAVVSINAFKGVEFGLGFEAGYRKGSQVMDEILWSKEDGYTRRTNNLGGFEGGMTNGQPIVVRGVMKPIPTLYKPLMSVDIETHEPYKATVERSDPTALPAAGMVMEAVVATVLAQEILEKFSSDNLEELKEAVAKHRDYTKNY</sequence>
<reference key="1">
    <citation type="journal article" date="2001" name="Microb. Drug Resist.">
        <title>Annotated draft genomic sequence from a Streptococcus pneumoniae type 19F clinical isolate.</title>
        <authorList>
            <person name="Dopazo J."/>
            <person name="Mendoza A."/>
            <person name="Herrero J."/>
            <person name="Caldara F."/>
            <person name="Humbert Y."/>
            <person name="Friedli L."/>
            <person name="Guerrier M."/>
            <person name="Grand-Schenk E."/>
            <person name="Gandin C."/>
            <person name="de Francesco M."/>
            <person name="Polissi A."/>
            <person name="Buell G."/>
            <person name="Feger G."/>
            <person name="Garcia E."/>
            <person name="Peitsch M."/>
            <person name="Garcia-Bustos J.F."/>
        </authorList>
    </citation>
    <scope>NUCLEOTIDE SEQUENCE [LARGE SCALE GENOMIC DNA]</scope>
    <source>
        <strain>G54</strain>
    </source>
</reference>
<reference key="2">
    <citation type="submission" date="2008-03" db="EMBL/GenBank/DDBJ databases">
        <title>Pneumococcal beta glucoside metabolism investigated by whole genome comparison.</title>
        <authorList>
            <person name="Mulas L."/>
            <person name="Trappetti C."/>
            <person name="Hakenbeck R."/>
            <person name="Iannelli F."/>
            <person name="Pozzi G."/>
            <person name="Davidsen T.M."/>
            <person name="Tettelin H."/>
            <person name="Oggioni M."/>
        </authorList>
    </citation>
    <scope>NUCLEOTIDE SEQUENCE [LARGE SCALE GENOMIC DNA]</scope>
    <source>
        <strain>G54</strain>
    </source>
</reference>
<accession>B5E5N2</accession>
<gene>
    <name evidence="1" type="primary">aroC</name>
    <name type="ordered locus">SPG_1315</name>
</gene>
<organism>
    <name type="scientific">Streptococcus pneumoniae serotype 19F (strain G54)</name>
    <dbReference type="NCBI Taxonomy" id="512566"/>
    <lineage>
        <taxon>Bacteria</taxon>
        <taxon>Bacillati</taxon>
        <taxon>Bacillota</taxon>
        <taxon>Bacilli</taxon>
        <taxon>Lactobacillales</taxon>
        <taxon>Streptococcaceae</taxon>
        <taxon>Streptococcus</taxon>
    </lineage>
</organism>
<protein>
    <recommendedName>
        <fullName evidence="1">Chorismate synthase</fullName>
        <shortName evidence="1">CS</shortName>
        <ecNumber evidence="1">4.2.3.5</ecNumber>
    </recommendedName>
    <alternativeName>
        <fullName evidence="1">5-enolpyruvylshikimate-3-phosphate phospholyase</fullName>
    </alternativeName>
</protein>
<name>AROC_STRP4</name>
<dbReference type="EC" id="4.2.3.5" evidence="1"/>
<dbReference type="EMBL" id="CP001015">
    <property type="protein sequence ID" value="ACF56600.1"/>
    <property type="molecule type" value="Genomic_DNA"/>
</dbReference>
<dbReference type="KEGG" id="spx:SPG_1315"/>
<dbReference type="HOGENOM" id="CLU_034547_2_0_9"/>
<dbReference type="UniPathway" id="UPA00053">
    <property type="reaction ID" value="UER00090"/>
</dbReference>
<dbReference type="GO" id="GO:0005829">
    <property type="term" value="C:cytosol"/>
    <property type="evidence" value="ECO:0007669"/>
    <property type="project" value="TreeGrafter"/>
</dbReference>
<dbReference type="GO" id="GO:0004107">
    <property type="term" value="F:chorismate synthase activity"/>
    <property type="evidence" value="ECO:0007669"/>
    <property type="project" value="UniProtKB-UniRule"/>
</dbReference>
<dbReference type="GO" id="GO:0010181">
    <property type="term" value="F:FMN binding"/>
    <property type="evidence" value="ECO:0007669"/>
    <property type="project" value="TreeGrafter"/>
</dbReference>
<dbReference type="GO" id="GO:0008652">
    <property type="term" value="P:amino acid biosynthetic process"/>
    <property type="evidence" value="ECO:0007669"/>
    <property type="project" value="UniProtKB-KW"/>
</dbReference>
<dbReference type="GO" id="GO:0009073">
    <property type="term" value="P:aromatic amino acid family biosynthetic process"/>
    <property type="evidence" value="ECO:0007669"/>
    <property type="project" value="UniProtKB-KW"/>
</dbReference>
<dbReference type="GO" id="GO:0009423">
    <property type="term" value="P:chorismate biosynthetic process"/>
    <property type="evidence" value="ECO:0007669"/>
    <property type="project" value="UniProtKB-UniRule"/>
</dbReference>
<dbReference type="CDD" id="cd07304">
    <property type="entry name" value="Chorismate_synthase"/>
    <property type="match status" value="1"/>
</dbReference>
<dbReference type="FunFam" id="3.60.150.10:FF:000002">
    <property type="entry name" value="Chorismate synthase"/>
    <property type="match status" value="1"/>
</dbReference>
<dbReference type="Gene3D" id="3.60.150.10">
    <property type="entry name" value="Chorismate synthase AroC"/>
    <property type="match status" value="1"/>
</dbReference>
<dbReference type="HAMAP" id="MF_00300">
    <property type="entry name" value="Chorismate_synth"/>
    <property type="match status" value="1"/>
</dbReference>
<dbReference type="InterPro" id="IPR000453">
    <property type="entry name" value="Chorismate_synth"/>
</dbReference>
<dbReference type="InterPro" id="IPR035904">
    <property type="entry name" value="Chorismate_synth_AroC_sf"/>
</dbReference>
<dbReference type="InterPro" id="IPR020541">
    <property type="entry name" value="Chorismate_synthase_CS"/>
</dbReference>
<dbReference type="NCBIfam" id="TIGR00033">
    <property type="entry name" value="aroC"/>
    <property type="match status" value="1"/>
</dbReference>
<dbReference type="NCBIfam" id="NF003793">
    <property type="entry name" value="PRK05382.1"/>
    <property type="match status" value="1"/>
</dbReference>
<dbReference type="PANTHER" id="PTHR21085">
    <property type="entry name" value="CHORISMATE SYNTHASE"/>
    <property type="match status" value="1"/>
</dbReference>
<dbReference type="PANTHER" id="PTHR21085:SF0">
    <property type="entry name" value="CHORISMATE SYNTHASE"/>
    <property type="match status" value="1"/>
</dbReference>
<dbReference type="Pfam" id="PF01264">
    <property type="entry name" value="Chorismate_synt"/>
    <property type="match status" value="1"/>
</dbReference>
<dbReference type="PIRSF" id="PIRSF001456">
    <property type="entry name" value="Chorismate_synth"/>
    <property type="match status" value="1"/>
</dbReference>
<dbReference type="SUPFAM" id="SSF103263">
    <property type="entry name" value="Chorismate synthase, AroC"/>
    <property type="match status" value="1"/>
</dbReference>
<dbReference type="PROSITE" id="PS00787">
    <property type="entry name" value="CHORISMATE_SYNTHASE_1"/>
    <property type="match status" value="1"/>
</dbReference>
<dbReference type="PROSITE" id="PS00788">
    <property type="entry name" value="CHORISMATE_SYNTHASE_2"/>
    <property type="match status" value="1"/>
</dbReference>
<dbReference type="PROSITE" id="PS00789">
    <property type="entry name" value="CHORISMATE_SYNTHASE_3"/>
    <property type="match status" value="1"/>
</dbReference>
<evidence type="ECO:0000255" key="1">
    <source>
        <dbReference type="HAMAP-Rule" id="MF_00300"/>
    </source>
</evidence>
<feature type="chain" id="PRO_1000115404" description="Chorismate synthase">
    <location>
        <begin position="1"/>
        <end position="388"/>
    </location>
</feature>
<feature type="binding site" evidence="1">
    <location>
        <position position="39"/>
    </location>
    <ligand>
        <name>NADP(+)</name>
        <dbReference type="ChEBI" id="CHEBI:58349"/>
    </ligand>
</feature>
<feature type="binding site" evidence="1">
    <location>
        <position position="45"/>
    </location>
    <ligand>
        <name>NADP(+)</name>
        <dbReference type="ChEBI" id="CHEBI:58349"/>
    </ligand>
</feature>
<feature type="binding site" evidence="1">
    <location>
        <begin position="130"/>
        <end position="132"/>
    </location>
    <ligand>
        <name>FMN</name>
        <dbReference type="ChEBI" id="CHEBI:58210"/>
    </ligand>
</feature>
<feature type="binding site" evidence="1">
    <location>
        <begin position="251"/>
        <end position="252"/>
    </location>
    <ligand>
        <name>FMN</name>
        <dbReference type="ChEBI" id="CHEBI:58210"/>
    </ligand>
</feature>
<feature type="binding site" evidence="1">
    <location>
        <position position="296"/>
    </location>
    <ligand>
        <name>FMN</name>
        <dbReference type="ChEBI" id="CHEBI:58210"/>
    </ligand>
</feature>
<feature type="binding site" evidence="1">
    <location>
        <begin position="311"/>
        <end position="315"/>
    </location>
    <ligand>
        <name>FMN</name>
        <dbReference type="ChEBI" id="CHEBI:58210"/>
    </ligand>
</feature>
<feature type="binding site" evidence="1">
    <location>
        <position position="337"/>
    </location>
    <ligand>
        <name>FMN</name>
        <dbReference type="ChEBI" id="CHEBI:58210"/>
    </ligand>
</feature>
<proteinExistence type="inferred from homology"/>